<name>ORDL_HAEIN</name>
<accession>P44732</accession>
<keyword id="KW-0520">NAD</keyword>
<keyword id="KW-0560">Oxidoreductase</keyword>
<keyword id="KW-1185">Reference proteome</keyword>
<dbReference type="EC" id="1.-.-.-"/>
<dbReference type="EMBL" id="L42023">
    <property type="protein sequence ID" value="AAC22156.1"/>
    <property type="molecule type" value="Genomic_DNA"/>
</dbReference>
<dbReference type="PIR" id="F64072">
    <property type="entry name" value="F64072"/>
</dbReference>
<dbReference type="RefSeq" id="NP_438657.1">
    <property type="nucleotide sequence ID" value="NC_000907.1"/>
</dbReference>
<dbReference type="SMR" id="P44732"/>
<dbReference type="STRING" id="71421.HI_0499"/>
<dbReference type="EnsemblBacteria" id="AAC22156">
    <property type="protein sequence ID" value="AAC22156"/>
    <property type="gene ID" value="HI_0499"/>
</dbReference>
<dbReference type="KEGG" id="hin:HI_0499"/>
<dbReference type="PATRIC" id="fig|71421.8.peg.517"/>
<dbReference type="eggNOG" id="COG0665">
    <property type="taxonomic scope" value="Bacteria"/>
</dbReference>
<dbReference type="HOGENOM" id="CLU_007884_3_0_6"/>
<dbReference type="OrthoDB" id="311718at2"/>
<dbReference type="PhylomeDB" id="P44732"/>
<dbReference type="BioCyc" id="HINF71421:G1GJ1-512-MONOMER"/>
<dbReference type="Proteomes" id="UP000000579">
    <property type="component" value="Chromosome"/>
</dbReference>
<dbReference type="GO" id="GO:0005737">
    <property type="term" value="C:cytoplasm"/>
    <property type="evidence" value="ECO:0000318"/>
    <property type="project" value="GO_Central"/>
</dbReference>
<dbReference type="GO" id="GO:0016491">
    <property type="term" value="F:oxidoreductase activity"/>
    <property type="evidence" value="ECO:0007669"/>
    <property type="project" value="UniProtKB-KW"/>
</dbReference>
<dbReference type="Gene3D" id="3.30.9.10">
    <property type="entry name" value="D-Amino Acid Oxidase, subunit A, domain 2"/>
    <property type="match status" value="1"/>
</dbReference>
<dbReference type="Gene3D" id="3.50.50.60">
    <property type="entry name" value="FAD/NAD(P)-binding domain"/>
    <property type="match status" value="1"/>
</dbReference>
<dbReference type="InterPro" id="IPR006076">
    <property type="entry name" value="FAD-dep_OxRdtase"/>
</dbReference>
<dbReference type="InterPro" id="IPR036188">
    <property type="entry name" value="FAD/NAD-bd_sf"/>
</dbReference>
<dbReference type="PANTHER" id="PTHR13847:SF281">
    <property type="entry name" value="FAD DEPENDENT OXIDOREDUCTASE DOMAIN-CONTAINING PROTEIN"/>
    <property type="match status" value="1"/>
</dbReference>
<dbReference type="PANTHER" id="PTHR13847">
    <property type="entry name" value="SARCOSINE DEHYDROGENASE-RELATED"/>
    <property type="match status" value="1"/>
</dbReference>
<dbReference type="Pfam" id="PF01266">
    <property type="entry name" value="DAO"/>
    <property type="match status" value="1"/>
</dbReference>
<dbReference type="SUPFAM" id="SSF51905">
    <property type="entry name" value="FAD/NAD(P)-binding domain"/>
    <property type="match status" value="1"/>
</dbReference>
<feature type="chain" id="PRO_0000058078" description="Probable oxidoreductase OrdL">
    <location>
        <begin position="1"/>
        <end position="431"/>
    </location>
</feature>
<sequence>MLNFAYQEHVRSYYFDSRNQDFQFPPLTQIEHADVCVIGAGFFGLSAALELAEKGKKVIVLEGARVGFGASGRSGGQAINGFEEGIDEYIKQVGEDKAHKLWNMSLETIDIIDERIEKYSIQCDWKKGYATLALNERRMDDLIEMEKESHKNFGYQNMQLWDKTKLKQHLGSDIYVGGLFDSNSGHLHPLNYCLGLAKACVDLGVQIFEQSPVVDMVEKNGCVEVKTAKSAVISQDVILATNAYIDVLPKSIHHGINRKILPVESFIIATEPLSQAVADSVINNGMSVCDNNLLLDYYRLSADNRLLFGSDSSSEKDMVAIMRKNMLCVFPQLENVKIDYGWAGPIDMTLNSTPHFGRISPHIYFAHGYSGHGVALTGLAGRIVAEAILGDDERLSIFEGLKVPSVYGGRIIKDLATKIGVQYYKFLDKYR</sequence>
<organism>
    <name type="scientific">Haemophilus influenzae (strain ATCC 51907 / DSM 11121 / KW20 / Rd)</name>
    <dbReference type="NCBI Taxonomy" id="71421"/>
    <lineage>
        <taxon>Bacteria</taxon>
        <taxon>Pseudomonadati</taxon>
        <taxon>Pseudomonadota</taxon>
        <taxon>Gammaproteobacteria</taxon>
        <taxon>Pasteurellales</taxon>
        <taxon>Pasteurellaceae</taxon>
        <taxon>Haemophilus</taxon>
    </lineage>
</organism>
<protein>
    <recommendedName>
        <fullName>Probable oxidoreductase OrdL</fullName>
        <ecNumber>1.-.-.-</ecNumber>
    </recommendedName>
</protein>
<reference key="1">
    <citation type="journal article" date="1995" name="Science">
        <title>Whole-genome random sequencing and assembly of Haemophilus influenzae Rd.</title>
        <authorList>
            <person name="Fleischmann R.D."/>
            <person name="Adams M.D."/>
            <person name="White O."/>
            <person name="Clayton R.A."/>
            <person name="Kirkness E.F."/>
            <person name="Kerlavage A.R."/>
            <person name="Bult C.J."/>
            <person name="Tomb J.-F."/>
            <person name="Dougherty B.A."/>
            <person name="Merrick J.M."/>
            <person name="McKenney K."/>
            <person name="Sutton G.G."/>
            <person name="FitzHugh W."/>
            <person name="Fields C.A."/>
            <person name="Gocayne J.D."/>
            <person name="Scott J.D."/>
            <person name="Shirley R."/>
            <person name="Liu L.-I."/>
            <person name="Glodek A."/>
            <person name="Kelley J.M."/>
            <person name="Weidman J.F."/>
            <person name="Phillips C.A."/>
            <person name="Spriggs T."/>
            <person name="Hedblom E."/>
            <person name="Cotton M.D."/>
            <person name="Utterback T.R."/>
            <person name="Hanna M.C."/>
            <person name="Nguyen D.T."/>
            <person name="Saudek D.M."/>
            <person name="Brandon R.C."/>
            <person name="Fine L.D."/>
            <person name="Fritchman J.L."/>
            <person name="Fuhrmann J.L."/>
            <person name="Geoghagen N.S.M."/>
            <person name="Gnehm C.L."/>
            <person name="McDonald L.A."/>
            <person name="Small K.V."/>
            <person name="Fraser C.M."/>
            <person name="Smith H.O."/>
            <person name="Venter J.C."/>
        </authorList>
    </citation>
    <scope>NUCLEOTIDE SEQUENCE [LARGE SCALE GENOMIC DNA]</scope>
    <source>
        <strain>ATCC 51907 / DSM 11121 / KW20 / Rd</strain>
    </source>
</reference>
<proteinExistence type="predicted"/>
<gene>
    <name type="primary">ordL</name>
    <name type="ordered locus">HI_0499</name>
</gene>